<protein>
    <recommendedName>
        <fullName evidence="1">Phenylalanine--tRNA ligase beta subunit</fullName>
        <ecNumber evidence="1">6.1.1.20</ecNumber>
    </recommendedName>
    <alternativeName>
        <fullName evidence="1">Phenylalanyl-tRNA synthetase beta subunit</fullName>
        <shortName evidence="1">PheRS</shortName>
    </alternativeName>
</protein>
<gene>
    <name evidence="1" type="primary">pheT</name>
    <name type="ordered locus">Ta0551</name>
</gene>
<comment type="catalytic activity">
    <reaction evidence="1">
        <text>tRNA(Phe) + L-phenylalanine + ATP = L-phenylalanyl-tRNA(Phe) + AMP + diphosphate + H(+)</text>
        <dbReference type="Rhea" id="RHEA:19413"/>
        <dbReference type="Rhea" id="RHEA-COMP:9668"/>
        <dbReference type="Rhea" id="RHEA-COMP:9699"/>
        <dbReference type="ChEBI" id="CHEBI:15378"/>
        <dbReference type="ChEBI" id="CHEBI:30616"/>
        <dbReference type="ChEBI" id="CHEBI:33019"/>
        <dbReference type="ChEBI" id="CHEBI:58095"/>
        <dbReference type="ChEBI" id="CHEBI:78442"/>
        <dbReference type="ChEBI" id="CHEBI:78531"/>
        <dbReference type="ChEBI" id="CHEBI:456215"/>
        <dbReference type="EC" id="6.1.1.20"/>
    </reaction>
</comment>
<comment type="cofactor">
    <cofactor evidence="1">
        <name>Mg(2+)</name>
        <dbReference type="ChEBI" id="CHEBI:18420"/>
    </cofactor>
</comment>
<comment type="subunit">
    <text evidence="1">Tetramer of two alpha and two beta subunits.</text>
</comment>
<comment type="subcellular location">
    <subcellularLocation>
        <location evidence="1">Cytoplasm</location>
    </subcellularLocation>
</comment>
<comment type="similarity">
    <text evidence="1 2">Belongs to the phenylalanyl-tRNA synthetase beta subunit family. Type 2 subfamily.</text>
</comment>
<reference key="1">
    <citation type="journal article" date="2000" name="Nature">
        <title>The genome sequence of the thermoacidophilic scavenger Thermoplasma acidophilum.</title>
        <authorList>
            <person name="Ruepp A."/>
            <person name="Graml W."/>
            <person name="Santos-Martinez M.-L."/>
            <person name="Koretke K.K."/>
            <person name="Volker C."/>
            <person name="Mewes H.-W."/>
            <person name="Frishman D."/>
            <person name="Stocker S."/>
            <person name="Lupas A.N."/>
            <person name="Baumeister W."/>
        </authorList>
    </citation>
    <scope>NUCLEOTIDE SEQUENCE [LARGE SCALE GENOMIC DNA]</scope>
    <source>
        <strain>ATCC 25905 / DSM 1728 / JCM 9062 / NBRC 15155 / AMRC-C165</strain>
    </source>
</reference>
<proteinExistence type="inferred from homology"/>
<sequence length="543" mass="61613">MVVIRAPLKELEGRYGREIVDLILRYSSIIGYSVDHDEELKIEFNPDRPDLFSFPTLMKQIKIFFYGEVEIRKPQIRDDAVKVTVSKGVRDIRPYFSALIAEGSSIGVHFDELINYQEILHASIGKDRSKMAIGIHDLEKTGDSIHYTTVSRNQRMQTYDGMEGTVDWIIKNHEKGIAYGRLLPGTGRSVAITDNEGNILSLPPIVNSYRSRIDEGTKKFFVDITGTDLNSVKFAHHLMSNFFSSLKYRIRTPSIDGLPSRETEIIRAFDFRIMRPARRSIERYLGEKMDSEETITHLRRMGYVAEPGYPEIAVYVPGYRVDVMGEADIIEDILKSKGIENIEEKQIFIGKFGEPLFMNKVKDLARDTMIGLGFQEVMTFVLSPASYLQEYTGGVRIQNPKSEDYSVIRDKIYPDLLDLIARNKKHSLPQRIFEIGDKIVGGKQRTALSCVIADTRSEFSTAKSYMQGFLARFTSENPVIVPQMIYGSIDGRSGSIKIGEKIIGVIGEIHPAFLERFSLAVPVSFFEIDLDEIFIANMDHLGL</sequence>
<feature type="chain" id="PRO_0000127014" description="Phenylalanine--tRNA ligase beta subunit">
    <location>
        <begin position="1"/>
        <end position="543"/>
    </location>
</feature>
<feature type="domain" description="B5" evidence="1">
    <location>
        <begin position="269"/>
        <end position="344"/>
    </location>
</feature>
<feature type="binding site" evidence="1">
    <location>
        <position position="322"/>
    </location>
    <ligand>
        <name>Mg(2+)</name>
        <dbReference type="ChEBI" id="CHEBI:18420"/>
        <note>shared with alpha subunit</note>
    </ligand>
</feature>
<feature type="binding site" evidence="1">
    <location>
        <position position="328"/>
    </location>
    <ligand>
        <name>Mg(2+)</name>
        <dbReference type="ChEBI" id="CHEBI:18420"/>
        <note>shared with alpha subunit</note>
    </ligand>
</feature>
<feature type="binding site" evidence="1">
    <location>
        <position position="331"/>
    </location>
    <ligand>
        <name>Mg(2+)</name>
        <dbReference type="ChEBI" id="CHEBI:18420"/>
        <note>shared with alpha subunit</note>
    </ligand>
</feature>
<feature type="binding site" evidence="1">
    <location>
        <position position="332"/>
    </location>
    <ligand>
        <name>Mg(2+)</name>
        <dbReference type="ChEBI" id="CHEBI:18420"/>
        <note>shared with alpha subunit</note>
    </ligand>
</feature>
<name>SYFB_THEAC</name>
<organism>
    <name type="scientific">Thermoplasma acidophilum (strain ATCC 25905 / DSM 1728 / JCM 9062 / NBRC 15155 / AMRC-C165)</name>
    <dbReference type="NCBI Taxonomy" id="273075"/>
    <lineage>
        <taxon>Archaea</taxon>
        <taxon>Methanobacteriati</taxon>
        <taxon>Thermoplasmatota</taxon>
        <taxon>Thermoplasmata</taxon>
        <taxon>Thermoplasmatales</taxon>
        <taxon>Thermoplasmataceae</taxon>
        <taxon>Thermoplasma</taxon>
    </lineage>
</organism>
<evidence type="ECO:0000255" key="1">
    <source>
        <dbReference type="HAMAP-Rule" id="MF_00284"/>
    </source>
</evidence>
<evidence type="ECO:0000305" key="2"/>
<dbReference type="EC" id="6.1.1.20" evidence="1"/>
<dbReference type="EMBL" id="AL445064">
    <property type="protein sequence ID" value="CAC11691.1"/>
    <property type="molecule type" value="Genomic_DNA"/>
</dbReference>
<dbReference type="RefSeq" id="WP_010900976.1">
    <property type="nucleotide sequence ID" value="NC_002578.1"/>
</dbReference>
<dbReference type="SMR" id="P57694"/>
<dbReference type="FunCoup" id="P57694">
    <property type="interactions" value="243"/>
</dbReference>
<dbReference type="STRING" id="273075.gene:9571771"/>
<dbReference type="PaxDb" id="273075-Ta0551"/>
<dbReference type="EnsemblBacteria" id="CAC11691">
    <property type="protein sequence ID" value="CAC11691"/>
    <property type="gene ID" value="CAC11691"/>
</dbReference>
<dbReference type="KEGG" id="tac:Ta0551"/>
<dbReference type="eggNOG" id="arCOG00412">
    <property type="taxonomic scope" value="Archaea"/>
</dbReference>
<dbReference type="HOGENOM" id="CLU_020279_3_0_2"/>
<dbReference type="InParanoid" id="P57694"/>
<dbReference type="OrthoDB" id="10073at2157"/>
<dbReference type="Proteomes" id="UP000001024">
    <property type="component" value="Chromosome"/>
</dbReference>
<dbReference type="GO" id="GO:0009328">
    <property type="term" value="C:phenylalanine-tRNA ligase complex"/>
    <property type="evidence" value="ECO:0007669"/>
    <property type="project" value="TreeGrafter"/>
</dbReference>
<dbReference type="GO" id="GO:0005524">
    <property type="term" value="F:ATP binding"/>
    <property type="evidence" value="ECO:0007669"/>
    <property type="project" value="UniProtKB-UniRule"/>
</dbReference>
<dbReference type="GO" id="GO:0000287">
    <property type="term" value="F:magnesium ion binding"/>
    <property type="evidence" value="ECO:0007669"/>
    <property type="project" value="InterPro"/>
</dbReference>
<dbReference type="GO" id="GO:0004826">
    <property type="term" value="F:phenylalanine-tRNA ligase activity"/>
    <property type="evidence" value="ECO:0007669"/>
    <property type="project" value="UniProtKB-UniRule"/>
</dbReference>
<dbReference type="GO" id="GO:0003723">
    <property type="term" value="F:RNA binding"/>
    <property type="evidence" value="ECO:0007669"/>
    <property type="project" value="InterPro"/>
</dbReference>
<dbReference type="GO" id="GO:0006432">
    <property type="term" value="P:phenylalanyl-tRNA aminoacylation"/>
    <property type="evidence" value="ECO:0007669"/>
    <property type="project" value="UniProtKB-UniRule"/>
</dbReference>
<dbReference type="CDD" id="cd00769">
    <property type="entry name" value="PheRS_beta_core"/>
    <property type="match status" value="1"/>
</dbReference>
<dbReference type="Gene3D" id="3.30.56.10">
    <property type="match status" value="1"/>
</dbReference>
<dbReference type="Gene3D" id="3.30.930.10">
    <property type="entry name" value="Bira Bifunctional Protein, Domain 2"/>
    <property type="match status" value="1"/>
</dbReference>
<dbReference type="Gene3D" id="3.50.40.10">
    <property type="entry name" value="Phenylalanyl-trna Synthetase, Chain B, domain 3"/>
    <property type="match status" value="1"/>
</dbReference>
<dbReference type="HAMAP" id="MF_00284">
    <property type="entry name" value="Phe_tRNA_synth_beta2"/>
    <property type="match status" value="1"/>
</dbReference>
<dbReference type="InterPro" id="IPR045864">
    <property type="entry name" value="aa-tRNA-synth_II/BPL/LPL"/>
</dbReference>
<dbReference type="InterPro" id="IPR005146">
    <property type="entry name" value="B3/B4_tRNA-bd"/>
</dbReference>
<dbReference type="InterPro" id="IPR009061">
    <property type="entry name" value="DNA-bd_dom_put_sf"/>
</dbReference>
<dbReference type="InterPro" id="IPR045060">
    <property type="entry name" value="Phe-tRNA-ligase_IIc_bsu"/>
</dbReference>
<dbReference type="InterPro" id="IPR004531">
    <property type="entry name" value="Phe-tRNA-synth_IIc_bsu_arc_euk"/>
</dbReference>
<dbReference type="InterPro" id="IPR020825">
    <property type="entry name" value="Phe-tRNA_synthase-like_B3/B4"/>
</dbReference>
<dbReference type="InterPro" id="IPR022918">
    <property type="entry name" value="Phe_tRNA_ligase_beta2_arc"/>
</dbReference>
<dbReference type="InterPro" id="IPR041616">
    <property type="entry name" value="PheRS_beta_core"/>
</dbReference>
<dbReference type="InterPro" id="IPR005147">
    <property type="entry name" value="tRNA_synthase_B5-dom"/>
</dbReference>
<dbReference type="NCBIfam" id="TIGR00471">
    <property type="entry name" value="pheT_arch"/>
    <property type="match status" value="1"/>
</dbReference>
<dbReference type="PANTHER" id="PTHR10947:SF0">
    <property type="entry name" value="PHENYLALANINE--TRNA LIGASE BETA SUBUNIT"/>
    <property type="match status" value="1"/>
</dbReference>
<dbReference type="PANTHER" id="PTHR10947">
    <property type="entry name" value="PHENYLALANYL-TRNA SYNTHETASE BETA CHAIN AND LEUCINE-RICH REPEAT-CONTAINING PROTEIN 47"/>
    <property type="match status" value="1"/>
</dbReference>
<dbReference type="Pfam" id="PF03484">
    <property type="entry name" value="B5"/>
    <property type="match status" value="1"/>
</dbReference>
<dbReference type="Pfam" id="PF17759">
    <property type="entry name" value="tRNA_synthFbeta"/>
    <property type="match status" value="1"/>
</dbReference>
<dbReference type="SMART" id="SM00873">
    <property type="entry name" value="B3_4"/>
    <property type="match status" value="1"/>
</dbReference>
<dbReference type="SMART" id="SM00874">
    <property type="entry name" value="B5"/>
    <property type="match status" value="1"/>
</dbReference>
<dbReference type="SUPFAM" id="SSF55681">
    <property type="entry name" value="Class II aaRS and biotin synthetases"/>
    <property type="match status" value="1"/>
</dbReference>
<dbReference type="SUPFAM" id="SSF46955">
    <property type="entry name" value="Putative DNA-binding domain"/>
    <property type="match status" value="1"/>
</dbReference>
<dbReference type="PROSITE" id="PS51483">
    <property type="entry name" value="B5"/>
    <property type="match status" value="1"/>
</dbReference>
<keyword id="KW-0030">Aminoacyl-tRNA synthetase</keyword>
<keyword id="KW-0067">ATP-binding</keyword>
<keyword id="KW-0963">Cytoplasm</keyword>
<keyword id="KW-0436">Ligase</keyword>
<keyword id="KW-0460">Magnesium</keyword>
<keyword id="KW-0479">Metal-binding</keyword>
<keyword id="KW-0547">Nucleotide-binding</keyword>
<keyword id="KW-0648">Protein biosynthesis</keyword>
<keyword id="KW-1185">Reference proteome</keyword>
<accession>P57694</accession>